<gene>
    <name type="primary">trpB2</name>
    <name type="ordered locus">aq_1410</name>
</gene>
<proteinExistence type="inferred from homology"/>
<keyword id="KW-0028">Amino-acid biosynthesis</keyword>
<keyword id="KW-0057">Aromatic amino acid biosynthesis</keyword>
<keyword id="KW-0456">Lyase</keyword>
<keyword id="KW-0663">Pyridoxal phosphate</keyword>
<keyword id="KW-1185">Reference proteome</keyword>
<keyword id="KW-0822">Tryptophan biosynthesis</keyword>
<protein>
    <recommendedName>
        <fullName>Tryptophan synthase beta chain 2</fullName>
        <ecNumber>4.2.1.20</ecNumber>
    </recommendedName>
</protein>
<dbReference type="EC" id="4.2.1.20"/>
<dbReference type="EMBL" id="AE000657">
    <property type="protein sequence ID" value="AAC07370.1"/>
    <property type="molecule type" value="Genomic_DNA"/>
</dbReference>
<dbReference type="PIR" id="G70422">
    <property type="entry name" value="G70422"/>
</dbReference>
<dbReference type="RefSeq" id="NP_213974.1">
    <property type="nucleotide sequence ID" value="NC_000918.1"/>
</dbReference>
<dbReference type="RefSeq" id="WP_010880912.1">
    <property type="nucleotide sequence ID" value="NC_000918.1"/>
</dbReference>
<dbReference type="SMR" id="O67409"/>
<dbReference type="STRING" id="224324.aq_1410"/>
<dbReference type="EnsemblBacteria" id="AAC07370">
    <property type="protein sequence ID" value="AAC07370"/>
    <property type="gene ID" value="aq_1410"/>
</dbReference>
<dbReference type="KEGG" id="aae:aq_1410"/>
<dbReference type="PATRIC" id="fig|224324.8.peg.1105"/>
<dbReference type="eggNOG" id="COG1350">
    <property type="taxonomic scope" value="Bacteria"/>
</dbReference>
<dbReference type="HOGENOM" id="CLU_042858_1_0_0"/>
<dbReference type="InParanoid" id="O67409"/>
<dbReference type="OrthoDB" id="9766131at2"/>
<dbReference type="UniPathway" id="UPA00035">
    <property type="reaction ID" value="UER00044"/>
</dbReference>
<dbReference type="Proteomes" id="UP000000798">
    <property type="component" value="Chromosome"/>
</dbReference>
<dbReference type="GO" id="GO:0052684">
    <property type="term" value="F:L-serine hydro-lyase (adding indole, L-tryptophan-forming) activity"/>
    <property type="evidence" value="ECO:0000318"/>
    <property type="project" value="GO_Central"/>
</dbReference>
<dbReference type="GO" id="GO:0030170">
    <property type="term" value="F:pyridoxal phosphate binding"/>
    <property type="evidence" value="ECO:0007669"/>
    <property type="project" value="InterPro"/>
</dbReference>
<dbReference type="GO" id="GO:0004834">
    <property type="term" value="F:tryptophan synthase activity"/>
    <property type="evidence" value="ECO:0007669"/>
    <property type="project" value="UniProtKB-UniRule"/>
</dbReference>
<dbReference type="GO" id="GO:0000162">
    <property type="term" value="P:L-tryptophan biosynthetic process"/>
    <property type="evidence" value="ECO:0000318"/>
    <property type="project" value="GO_Central"/>
</dbReference>
<dbReference type="CDD" id="cd06446">
    <property type="entry name" value="Trp-synth_B"/>
    <property type="match status" value="1"/>
</dbReference>
<dbReference type="Gene3D" id="3.40.50.1100">
    <property type="match status" value="2"/>
</dbReference>
<dbReference type="HAMAP" id="MF_00133">
    <property type="entry name" value="Trp_synth_beta"/>
    <property type="match status" value="1"/>
</dbReference>
<dbReference type="InterPro" id="IPR006316">
    <property type="entry name" value="Trp_synth_b-like"/>
</dbReference>
<dbReference type="InterPro" id="IPR006653">
    <property type="entry name" value="Trp_synth_b_CS"/>
</dbReference>
<dbReference type="InterPro" id="IPR006654">
    <property type="entry name" value="Trp_synth_beta"/>
</dbReference>
<dbReference type="InterPro" id="IPR023026">
    <property type="entry name" value="Trp_synth_beta/beta-like"/>
</dbReference>
<dbReference type="InterPro" id="IPR001926">
    <property type="entry name" value="TrpB-like_PALP"/>
</dbReference>
<dbReference type="InterPro" id="IPR036052">
    <property type="entry name" value="TrpB-like_PALP_sf"/>
</dbReference>
<dbReference type="NCBIfam" id="NF009057">
    <property type="entry name" value="PRK12391.1"/>
    <property type="match status" value="1"/>
</dbReference>
<dbReference type="NCBIfam" id="TIGR01415">
    <property type="entry name" value="trpB_rel"/>
    <property type="match status" value="1"/>
</dbReference>
<dbReference type="PANTHER" id="PTHR48077:SF6">
    <property type="entry name" value="TRYPTOPHAN SYNTHASE"/>
    <property type="match status" value="1"/>
</dbReference>
<dbReference type="PANTHER" id="PTHR48077">
    <property type="entry name" value="TRYPTOPHAN SYNTHASE-RELATED"/>
    <property type="match status" value="1"/>
</dbReference>
<dbReference type="Pfam" id="PF00291">
    <property type="entry name" value="PALP"/>
    <property type="match status" value="1"/>
</dbReference>
<dbReference type="PIRSF" id="PIRSF001413">
    <property type="entry name" value="Trp_syn_beta"/>
    <property type="match status" value="1"/>
</dbReference>
<dbReference type="PIRSF" id="PIRSF500824">
    <property type="entry name" value="TrpB_prok"/>
    <property type="match status" value="1"/>
</dbReference>
<dbReference type="SUPFAM" id="SSF53686">
    <property type="entry name" value="Tryptophan synthase beta subunit-like PLP-dependent enzymes"/>
    <property type="match status" value="1"/>
</dbReference>
<dbReference type="PROSITE" id="PS00168">
    <property type="entry name" value="TRP_SYNTHASE_BETA"/>
    <property type="match status" value="1"/>
</dbReference>
<comment type="function">
    <text evidence="1">The beta subunit is responsible for the synthesis of L-tryptophan from indole and L-serine.</text>
</comment>
<comment type="catalytic activity">
    <reaction>
        <text>(1S,2R)-1-C-(indol-3-yl)glycerol 3-phosphate + L-serine = D-glyceraldehyde 3-phosphate + L-tryptophan + H2O</text>
        <dbReference type="Rhea" id="RHEA:10532"/>
        <dbReference type="ChEBI" id="CHEBI:15377"/>
        <dbReference type="ChEBI" id="CHEBI:33384"/>
        <dbReference type="ChEBI" id="CHEBI:57912"/>
        <dbReference type="ChEBI" id="CHEBI:58866"/>
        <dbReference type="ChEBI" id="CHEBI:59776"/>
        <dbReference type="EC" id="4.2.1.20"/>
    </reaction>
</comment>
<comment type="cofactor">
    <cofactor evidence="1">
        <name>pyridoxal 5'-phosphate</name>
        <dbReference type="ChEBI" id="CHEBI:597326"/>
    </cofactor>
</comment>
<comment type="pathway">
    <text>Amino-acid biosynthesis; L-tryptophan biosynthesis; L-tryptophan from chorismate: step 5/5.</text>
</comment>
<comment type="subunit">
    <text evidence="1">Tetramer of two alpha and two beta chains.</text>
</comment>
<comment type="similarity">
    <text evidence="2">Belongs to the TrpB family.</text>
</comment>
<name>TRPB2_AQUAE</name>
<accession>O67409</accession>
<evidence type="ECO:0000250" key="1"/>
<evidence type="ECO:0000305" key="2"/>
<organism>
    <name type="scientific">Aquifex aeolicus (strain VF5)</name>
    <dbReference type="NCBI Taxonomy" id="224324"/>
    <lineage>
        <taxon>Bacteria</taxon>
        <taxon>Pseudomonadati</taxon>
        <taxon>Aquificota</taxon>
        <taxon>Aquificia</taxon>
        <taxon>Aquificales</taxon>
        <taxon>Aquificaceae</taxon>
        <taxon>Aquifex</taxon>
    </lineage>
</organism>
<sequence length="434" mass="48314">MRKFLLSEGEIPKKWLNILPLLPEPLEPPLDPETMEPVKPEKLLAIFPEPLVEQEVSDKEWIDIPEEVLDIYSLWRPTPLHRAKNLEEFLGTPAKIFYKNESVSPPGSHKPNTAVAQAYYNKISGVKRLTTETGAGQWGSALSFATQFFDLQCRVYMVRVSYNQKPYRRILMETWKGEVIPSPSPYTNAGRKYYEENPEHPGSLGIAISEAIEEAASREDTKYSLGSVLNHVLLHQTVIGLEAKKQMEEAGYYPDVIIGAVGGGSNFAGLSFPFLADVLRGDKRKEDLKVLAVEPEACPTLTKGEYKYDFGDSVGLTPLIKMYTLGHDFVPSPIHAGGLRYHGDAPLVCKLYNLGYIDAVAYKQTEVFEAAVTFARTEGIVPAPESAHAIKAAIDEALKCKETGEEKVILFNLSGHGYFDLSAYDKYLHGELTD</sequence>
<reference key="1">
    <citation type="journal article" date="1998" name="Nature">
        <title>The complete genome of the hyperthermophilic bacterium Aquifex aeolicus.</title>
        <authorList>
            <person name="Deckert G."/>
            <person name="Warren P.V."/>
            <person name="Gaasterland T."/>
            <person name="Young W.G."/>
            <person name="Lenox A.L."/>
            <person name="Graham D.E."/>
            <person name="Overbeek R."/>
            <person name="Snead M.A."/>
            <person name="Keller M."/>
            <person name="Aujay M."/>
            <person name="Huber R."/>
            <person name="Feldman R.A."/>
            <person name="Short J.M."/>
            <person name="Olsen G.J."/>
            <person name="Swanson R.V."/>
        </authorList>
    </citation>
    <scope>NUCLEOTIDE SEQUENCE [LARGE SCALE GENOMIC DNA]</scope>
    <source>
        <strain>VF5</strain>
    </source>
</reference>
<feature type="chain" id="PRO_0000098913" description="Tryptophan synthase beta chain 2">
    <location>
        <begin position="1"/>
        <end position="434"/>
    </location>
</feature>
<feature type="modified residue" description="N6-(pyridoxal phosphate)lysine" evidence="1">
    <location>
        <position position="110"/>
    </location>
</feature>